<protein>
    <recommendedName>
        <fullName>U6 small nuclear RNA (adenine-(43)-N(6))-methyltransferase</fullName>
        <ecNumber evidence="1 3">2.1.1.346</ecNumber>
    </recommendedName>
    <alternativeName>
        <fullName evidence="4">N(6)-adenosine-methyltransferase mett-10</fullName>
        <ecNumber evidence="2">2.1.1.348</ecNumber>
    </alternativeName>
</protein>
<reference key="1">
    <citation type="journal article" date="2003" name="PLoS Biol.">
        <title>The genome sequence of Caenorhabditis briggsae: a platform for comparative genomics.</title>
        <authorList>
            <person name="Stein L.D."/>
            <person name="Bao Z."/>
            <person name="Blasiar D."/>
            <person name="Blumenthal T."/>
            <person name="Brent M.R."/>
            <person name="Chen N."/>
            <person name="Chinwalla A."/>
            <person name="Clarke L."/>
            <person name="Clee C."/>
            <person name="Coghlan A."/>
            <person name="Coulson A."/>
            <person name="D'Eustachio P."/>
            <person name="Fitch D.H.A."/>
            <person name="Fulton L.A."/>
            <person name="Fulton R.E."/>
            <person name="Griffiths-Jones S."/>
            <person name="Harris T.W."/>
            <person name="Hillier L.W."/>
            <person name="Kamath R."/>
            <person name="Kuwabara P.E."/>
            <person name="Mardis E.R."/>
            <person name="Marra M.A."/>
            <person name="Miner T.L."/>
            <person name="Minx P."/>
            <person name="Mullikin J.C."/>
            <person name="Plumb R.W."/>
            <person name="Rogers J."/>
            <person name="Schein J.E."/>
            <person name="Sohrmann M."/>
            <person name="Spieth J."/>
            <person name="Stajich J.E."/>
            <person name="Wei C."/>
            <person name="Willey D."/>
            <person name="Wilson R.K."/>
            <person name="Durbin R.M."/>
            <person name="Waterston R.H."/>
        </authorList>
    </citation>
    <scope>NUCLEOTIDE SEQUENCE [LARGE SCALE GENOMIC DNA]</scope>
    <source>
        <strain>AF16</strain>
    </source>
</reference>
<feature type="chain" id="PRO_0000310772" description="U6 small nuclear RNA (adenine-(43)-N(6))-methyltransferase">
    <location>
        <begin position="1"/>
        <end position="481"/>
    </location>
</feature>
<feature type="binding site" evidence="3">
    <location>
        <position position="82"/>
    </location>
    <ligand>
        <name>S-adenosyl-L-methionine</name>
        <dbReference type="ChEBI" id="CHEBI:59789"/>
    </ligand>
</feature>
<feature type="binding site" evidence="3">
    <location>
        <position position="108"/>
    </location>
    <ligand>
        <name>S-adenosyl-L-methionine</name>
        <dbReference type="ChEBI" id="CHEBI:59789"/>
    </ligand>
</feature>
<feature type="binding site" evidence="3">
    <location>
        <position position="131"/>
    </location>
    <ligand>
        <name>S-adenosyl-L-methionine</name>
        <dbReference type="ChEBI" id="CHEBI:59789"/>
    </ligand>
</feature>
<feature type="binding site" evidence="3">
    <location>
        <position position="164"/>
    </location>
    <ligand>
        <name>S-adenosyl-L-methionine</name>
        <dbReference type="ChEBI" id="CHEBI:59789"/>
    </ligand>
</feature>
<feature type="binding site" evidence="3">
    <location>
        <position position="184"/>
    </location>
    <ligand>
        <name>S-adenosyl-L-methionine</name>
        <dbReference type="ChEBI" id="CHEBI:59789"/>
    </ligand>
</feature>
<gene>
    <name evidence="5" type="primary">mett-10</name>
    <name evidence="5" type="ORF">CBG09879</name>
</gene>
<name>MET16_CAEBR</name>
<sequence length="481" mass="54143">MAQGNEMHPRNPYRDKPPDFKALAIEYPEFRKFCQYVSNGKVTLDFRKDAAVRCLTQTLLKKDFSLNVNLPAGHLVPRVPQKLNYCLLIDDILQANSITSNVVGIDIGTGTSCIHALIGARHFGWKFVATDGDENSVQVAHENVARNEMGDSICVVHVNPAVKTVLMDVINSMPDSEFSFCMCNPPFFEKSDKEERFCEEPSLSNETYSNNFDFDMRSAPHSETIASSAELYVEGGEVAFVNRIIDDSVCLRDRIKFYTTMIGRKSSLKPLLQRLERFGENVKFLVHPLNQGKTKRWMLAWTFAKEMTLNTALKNSSISFQCPKPGLVKLMQEISRLGGRWSQEQPSVLVAEFKSVTWTNQRARRKANALLFENSAKRARWNTSSVACEAMMGNGDGKDSYTNSGNFVYSESFKTSDPAAVETSSQAYFPLPSGVTPRPIVKLRIQVDPDDKCDTLSFELISGAKQHLHQIVQYLKNLLCR</sequence>
<dbReference type="EC" id="2.1.1.346" evidence="1 3"/>
<dbReference type="EC" id="2.1.1.348" evidence="2"/>
<dbReference type="EMBL" id="HE601459">
    <property type="protein sequence ID" value="CAP29423.1"/>
    <property type="molecule type" value="Genomic_DNA"/>
</dbReference>
<dbReference type="SMR" id="Q61J97"/>
<dbReference type="FunCoup" id="Q61J97">
    <property type="interactions" value="3006"/>
</dbReference>
<dbReference type="STRING" id="6238.Q61J97"/>
<dbReference type="KEGG" id="cbr:CBG_09879"/>
<dbReference type="CTD" id="8583568"/>
<dbReference type="WormBase" id="CBG09879">
    <property type="protein sequence ID" value="CBP40153"/>
    <property type="gene ID" value="WBGene00031392"/>
    <property type="gene designation" value="Cbr-mett-10"/>
</dbReference>
<dbReference type="eggNOG" id="KOG2912">
    <property type="taxonomic scope" value="Eukaryota"/>
</dbReference>
<dbReference type="HOGENOM" id="CLU_027534_0_0_1"/>
<dbReference type="InParanoid" id="Q61J97"/>
<dbReference type="OMA" id="NEMHPRN"/>
<dbReference type="Proteomes" id="UP000008549">
    <property type="component" value="Unassembled WGS sequence"/>
</dbReference>
<dbReference type="GO" id="GO:0005634">
    <property type="term" value="C:nucleus"/>
    <property type="evidence" value="ECO:0000318"/>
    <property type="project" value="GO_Central"/>
</dbReference>
<dbReference type="GO" id="GO:0001734">
    <property type="term" value="F:mRNA m(6)A methyltransferase activity"/>
    <property type="evidence" value="ECO:0007669"/>
    <property type="project" value="RHEA"/>
</dbReference>
<dbReference type="GO" id="GO:0120048">
    <property type="term" value="F:U6 snRNA (adenine-(43)-N(6))-methyltransferase activity"/>
    <property type="evidence" value="ECO:0007669"/>
    <property type="project" value="UniProtKB-EC"/>
</dbReference>
<dbReference type="GO" id="GO:0051301">
    <property type="term" value="P:cell division"/>
    <property type="evidence" value="ECO:0007669"/>
    <property type="project" value="UniProtKB-KW"/>
</dbReference>
<dbReference type="GO" id="GO:0051321">
    <property type="term" value="P:meiotic cell cycle"/>
    <property type="evidence" value="ECO:0007669"/>
    <property type="project" value="UniProtKB-KW"/>
</dbReference>
<dbReference type="GO" id="GO:0070475">
    <property type="term" value="P:rRNA base methylation"/>
    <property type="evidence" value="ECO:0000318"/>
    <property type="project" value="GO_Central"/>
</dbReference>
<dbReference type="FunFam" id="3.40.50.150:FF:000388">
    <property type="entry name" value="U6 small nuclear RNA (adenine-(43)-N(6))-methyltransferase"/>
    <property type="match status" value="1"/>
</dbReference>
<dbReference type="Gene3D" id="3.40.50.150">
    <property type="entry name" value="Vaccinia Virus protein VP39"/>
    <property type="match status" value="1"/>
</dbReference>
<dbReference type="InterPro" id="IPR017182">
    <property type="entry name" value="METTL16/PsiM"/>
</dbReference>
<dbReference type="InterPro" id="IPR010286">
    <property type="entry name" value="METTL16/RlmF"/>
</dbReference>
<dbReference type="InterPro" id="IPR029063">
    <property type="entry name" value="SAM-dependent_MTases_sf"/>
</dbReference>
<dbReference type="PANTHER" id="PTHR13393:SF0">
    <property type="entry name" value="RNA N6-ADENOSINE-METHYLTRANSFERASE METTL16"/>
    <property type="match status" value="1"/>
</dbReference>
<dbReference type="PANTHER" id="PTHR13393">
    <property type="entry name" value="SAM-DEPENDENT METHYLTRANSFERASE"/>
    <property type="match status" value="1"/>
</dbReference>
<dbReference type="Pfam" id="PF05971">
    <property type="entry name" value="Methyltransf_10"/>
    <property type="match status" value="1"/>
</dbReference>
<dbReference type="PIRSF" id="PIRSF037350">
    <property type="entry name" value="Mtase_ZK1128_prd"/>
    <property type="match status" value="1"/>
</dbReference>
<dbReference type="SUPFAM" id="SSF53335">
    <property type="entry name" value="S-adenosyl-L-methionine-dependent methyltransferases"/>
    <property type="match status" value="1"/>
</dbReference>
<proteinExistence type="inferred from homology"/>
<evidence type="ECO:0000250" key="1">
    <source>
        <dbReference type="UniProtKB" id="O42662"/>
    </source>
</evidence>
<evidence type="ECO:0000250" key="2">
    <source>
        <dbReference type="UniProtKB" id="Q09357"/>
    </source>
</evidence>
<evidence type="ECO:0000250" key="3">
    <source>
        <dbReference type="UniProtKB" id="Q86W50"/>
    </source>
</evidence>
<evidence type="ECO:0000305" key="4"/>
<evidence type="ECO:0000312" key="5">
    <source>
        <dbReference type="WormBase" id="CBG09879"/>
    </source>
</evidence>
<organism>
    <name type="scientific">Caenorhabditis briggsae</name>
    <dbReference type="NCBI Taxonomy" id="6238"/>
    <lineage>
        <taxon>Eukaryota</taxon>
        <taxon>Metazoa</taxon>
        <taxon>Ecdysozoa</taxon>
        <taxon>Nematoda</taxon>
        <taxon>Chromadorea</taxon>
        <taxon>Rhabditida</taxon>
        <taxon>Rhabditina</taxon>
        <taxon>Rhabditomorpha</taxon>
        <taxon>Rhabditoidea</taxon>
        <taxon>Rhabditidae</taxon>
        <taxon>Peloderinae</taxon>
        <taxon>Caenorhabditis</taxon>
    </lineage>
</organism>
<keyword id="KW-0131">Cell cycle</keyword>
<keyword id="KW-0132">Cell division</keyword>
<keyword id="KW-0469">Meiosis</keyword>
<keyword id="KW-0489">Methyltransferase</keyword>
<keyword id="KW-0498">Mitosis</keyword>
<keyword id="KW-0539">Nucleus</keyword>
<keyword id="KW-1185">Reference proteome</keyword>
<keyword id="KW-0949">S-adenosyl-L-methionine</keyword>
<keyword id="KW-0808">Transferase</keyword>
<accession>Q61J97</accession>
<accession>A8X9V8</accession>
<comment type="function">
    <text evidence="2">RNA N6-methyltransferase that methylates adenosine residues at the N(6) position of a subset of RNAs and is involved in S-adenosyl-L-methionine homeostasis by regulating splicing of S-adenosylmethionine synthase transcripts (sams-3, sams-4 and sams-5). Able to N6-methylate a subset of mRNAs containing the 5'UACAGAAAC-3' nonamer sequence. Plays a key role in S-adenosyl-L-methionine homeostasis: under rich-diet conditions, catalyzes N6-methylation of S-adenosylmethionine synthase mRNAs (sams-3, sams-4 and sams-5), directly inhibiting splicing and protein production of S-adenosylmethionine synthase. In addition to mRNAs, also able to mediate N6-methylation of U6 small nuclear RNA (U6 snRNA). Required for gamete production, inhibiting germ cell proliferative fate and ensuring germ cell meiotic development. Also promotes progression of the mitotic cell cycle in those germ cells that continue to proliferate. Plays a role in the development of the vulva, somatic gonad and embryo.</text>
</comment>
<comment type="catalytic activity">
    <reaction evidence="2">
        <text>an adenosine in mRNA + S-adenosyl-L-methionine = an N(6)-methyladenosine in mRNA + S-adenosyl-L-homocysteine + H(+)</text>
        <dbReference type="Rhea" id="RHEA:55584"/>
        <dbReference type="Rhea" id="RHEA-COMP:12414"/>
        <dbReference type="Rhea" id="RHEA-COMP:12417"/>
        <dbReference type="ChEBI" id="CHEBI:15378"/>
        <dbReference type="ChEBI" id="CHEBI:57856"/>
        <dbReference type="ChEBI" id="CHEBI:59789"/>
        <dbReference type="ChEBI" id="CHEBI:74411"/>
        <dbReference type="ChEBI" id="CHEBI:74449"/>
        <dbReference type="EC" id="2.1.1.348"/>
    </reaction>
    <physiologicalReaction direction="left-to-right" evidence="2">
        <dbReference type="Rhea" id="RHEA:55585"/>
    </physiologicalReaction>
</comment>
<comment type="catalytic activity">
    <reaction evidence="2">
        <text>adenosine in U6 snRNA + S-adenosyl-L-methionine = N(6)-methyladenosine in U6 snRNA + S-adenosyl-L-homocysteine + H(+)</text>
        <dbReference type="Rhea" id="RHEA:52808"/>
        <dbReference type="Rhea" id="RHEA-COMP:13573"/>
        <dbReference type="Rhea" id="RHEA-COMP:13574"/>
        <dbReference type="ChEBI" id="CHEBI:15378"/>
        <dbReference type="ChEBI" id="CHEBI:57856"/>
        <dbReference type="ChEBI" id="CHEBI:59789"/>
        <dbReference type="ChEBI" id="CHEBI:74411"/>
        <dbReference type="ChEBI" id="CHEBI:74449"/>
        <dbReference type="EC" id="2.1.1.346"/>
    </reaction>
    <physiologicalReaction direction="left-to-right" evidence="2">
        <dbReference type="Rhea" id="RHEA:52809"/>
    </physiologicalReaction>
</comment>
<comment type="subunit">
    <text evidence="2">Self-associates. Interacts with dlc-1; the interaction is direct, and is required for nuclear localization of mett-10.</text>
</comment>
<comment type="subcellular location">
    <subcellularLocation>
        <location evidence="2">Nucleus</location>
    </subcellularLocation>
    <text evidence="2">Accumulates in nuclei as cells enter meiosis. During meiotic prophase, expression is predominantly nuclear, but does not co-localize with DNA. Recruited to the nucleus by dlc-1, a component of the dynein complex.</text>
</comment>
<comment type="similarity">
    <text evidence="4">Belongs to the methyltransferase superfamily. METTL16/RlmF family.</text>
</comment>